<evidence type="ECO:0000255" key="1">
    <source>
        <dbReference type="HAMAP-Rule" id="MF_00102"/>
    </source>
</evidence>
<evidence type="ECO:0000305" key="2"/>
<comment type="function">
    <text evidence="1">Catalyzes the conversion of 4-hydroxy-tetrahydrodipicolinate (HTPA) to tetrahydrodipicolinate.</text>
</comment>
<comment type="catalytic activity">
    <reaction evidence="1">
        <text>(S)-2,3,4,5-tetrahydrodipicolinate + NAD(+) + H2O = (2S,4S)-4-hydroxy-2,3,4,5-tetrahydrodipicolinate + NADH + H(+)</text>
        <dbReference type="Rhea" id="RHEA:35323"/>
        <dbReference type="ChEBI" id="CHEBI:15377"/>
        <dbReference type="ChEBI" id="CHEBI:15378"/>
        <dbReference type="ChEBI" id="CHEBI:16845"/>
        <dbReference type="ChEBI" id="CHEBI:57540"/>
        <dbReference type="ChEBI" id="CHEBI:57945"/>
        <dbReference type="ChEBI" id="CHEBI:67139"/>
        <dbReference type="EC" id="1.17.1.8"/>
    </reaction>
</comment>
<comment type="catalytic activity">
    <reaction evidence="1">
        <text>(S)-2,3,4,5-tetrahydrodipicolinate + NADP(+) + H2O = (2S,4S)-4-hydroxy-2,3,4,5-tetrahydrodipicolinate + NADPH + H(+)</text>
        <dbReference type="Rhea" id="RHEA:35331"/>
        <dbReference type="ChEBI" id="CHEBI:15377"/>
        <dbReference type="ChEBI" id="CHEBI:15378"/>
        <dbReference type="ChEBI" id="CHEBI:16845"/>
        <dbReference type="ChEBI" id="CHEBI:57783"/>
        <dbReference type="ChEBI" id="CHEBI:58349"/>
        <dbReference type="ChEBI" id="CHEBI:67139"/>
        <dbReference type="EC" id="1.17.1.8"/>
    </reaction>
</comment>
<comment type="pathway">
    <text evidence="1">Amino-acid biosynthesis; L-lysine biosynthesis via DAP pathway; (S)-tetrahydrodipicolinate from L-aspartate: step 4/4.</text>
</comment>
<comment type="subunit">
    <text evidence="1">Homotetramer.</text>
</comment>
<comment type="subcellular location">
    <subcellularLocation>
        <location evidence="1">Cytoplasm</location>
    </subcellularLocation>
</comment>
<comment type="similarity">
    <text evidence="1">Belongs to the DapB family.</text>
</comment>
<comment type="caution">
    <text evidence="2">Was originally thought to be a dihydrodipicolinate reductase (DHDPR), catalyzing the conversion of dihydrodipicolinate to tetrahydrodipicolinate. However, it was shown in E.coli that the substrate of the enzymatic reaction is not dihydrodipicolinate (DHDP) but in fact (2S,4S)-4-hydroxy-2,3,4,5-tetrahydrodipicolinic acid (HTPA), the product released by the DapA-catalyzed reaction.</text>
</comment>
<organism>
    <name type="scientific">Klebsiella pneumoniae subsp. pneumoniae (strain ATCC 700721 / MGH 78578)</name>
    <dbReference type="NCBI Taxonomy" id="272620"/>
    <lineage>
        <taxon>Bacteria</taxon>
        <taxon>Pseudomonadati</taxon>
        <taxon>Pseudomonadota</taxon>
        <taxon>Gammaproteobacteria</taxon>
        <taxon>Enterobacterales</taxon>
        <taxon>Enterobacteriaceae</taxon>
        <taxon>Klebsiella/Raoultella group</taxon>
        <taxon>Klebsiella</taxon>
        <taxon>Klebsiella pneumoniae complex</taxon>
    </lineage>
</organism>
<proteinExistence type="inferred from homology"/>
<reference key="1">
    <citation type="submission" date="2006-09" db="EMBL/GenBank/DDBJ databases">
        <authorList>
            <consortium name="The Klebsiella pneumonia Genome Sequencing Project"/>
            <person name="McClelland M."/>
            <person name="Sanderson E.K."/>
            <person name="Spieth J."/>
            <person name="Clifton W.S."/>
            <person name="Latreille P."/>
            <person name="Sabo A."/>
            <person name="Pepin K."/>
            <person name="Bhonagiri V."/>
            <person name="Porwollik S."/>
            <person name="Ali J."/>
            <person name="Wilson R.K."/>
        </authorList>
    </citation>
    <scope>NUCLEOTIDE SEQUENCE [LARGE SCALE GENOMIC DNA]</scope>
    <source>
        <strain>ATCC 700721 / MGH 78578</strain>
    </source>
</reference>
<keyword id="KW-0028">Amino-acid biosynthesis</keyword>
<keyword id="KW-0963">Cytoplasm</keyword>
<keyword id="KW-0220">Diaminopimelate biosynthesis</keyword>
<keyword id="KW-0457">Lysine biosynthesis</keyword>
<keyword id="KW-0520">NAD</keyword>
<keyword id="KW-0521">NADP</keyword>
<keyword id="KW-0560">Oxidoreductase</keyword>
<sequence length="273" mass="28648">MHDAQIRVAIAGAGGRMGRQLIQAALQMEGVALGAALEREGSSLVGSDAGELAGAGKAGVAVQSSLAAVKDDFDVLIDFTRPEGTLNHLAFCREHGKGMVIGTTGFDDAGKQAIRDAAQDIAIVFAANFSVGVNVLLKLLEKAAKVMGDYTDIEIIEAHHRHKVDAPSGTALAMGEAIAGALNKDLKDCAVYSREGYTGERVPGTIGFATVRAGDIVGEHTAMFADIGERIEITHKASSRMTFANGAVRSALWLKGKKNGLFDMRDVLDLNSL</sequence>
<gene>
    <name evidence="1" type="primary">dapB</name>
    <name type="ordered locus">KPN78578_00380</name>
    <name type="ORF">KPN_00039</name>
</gene>
<name>DAPB_KLEP7</name>
<protein>
    <recommendedName>
        <fullName evidence="1">4-hydroxy-tetrahydrodipicolinate reductase</fullName>
        <shortName evidence="1">HTPA reductase</shortName>
        <ecNumber evidence="1">1.17.1.8</ecNumber>
    </recommendedName>
</protein>
<feature type="chain" id="PRO_1000008574" description="4-hydroxy-tetrahydrodipicolinate reductase">
    <location>
        <begin position="1"/>
        <end position="273"/>
    </location>
</feature>
<feature type="active site" description="Proton donor/acceptor" evidence="1">
    <location>
        <position position="159"/>
    </location>
</feature>
<feature type="active site" description="Proton donor" evidence="1">
    <location>
        <position position="163"/>
    </location>
</feature>
<feature type="binding site" evidence="1">
    <location>
        <begin position="12"/>
        <end position="17"/>
    </location>
    <ligand>
        <name>NAD(+)</name>
        <dbReference type="ChEBI" id="CHEBI:57540"/>
    </ligand>
</feature>
<feature type="binding site" evidence="1">
    <location>
        <position position="38"/>
    </location>
    <ligand>
        <name>NAD(+)</name>
        <dbReference type="ChEBI" id="CHEBI:57540"/>
    </ligand>
</feature>
<feature type="binding site" evidence="1">
    <location>
        <position position="39"/>
    </location>
    <ligand>
        <name>NADP(+)</name>
        <dbReference type="ChEBI" id="CHEBI:58349"/>
    </ligand>
</feature>
<feature type="binding site" evidence="1">
    <location>
        <begin position="102"/>
        <end position="104"/>
    </location>
    <ligand>
        <name>NAD(+)</name>
        <dbReference type="ChEBI" id="CHEBI:57540"/>
    </ligand>
</feature>
<feature type="binding site" evidence="1">
    <location>
        <begin position="126"/>
        <end position="129"/>
    </location>
    <ligand>
        <name>NAD(+)</name>
        <dbReference type="ChEBI" id="CHEBI:57540"/>
    </ligand>
</feature>
<feature type="binding site" evidence="1">
    <location>
        <position position="160"/>
    </location>
    <ligand>
        <name>(S)-2,3,4,5-tetrahydrodipicolinate</name>
        <dbReference type="ChEBI" id="CHEBI:16845"/>
    </ligand>
</feature>
<feature type="binding site" evidence="1">
    <location>
        <begin position="169"/>
        <end position="170"/>
    </location>
    <ligand>
        <name>(S)-2,3,4,5-tetrahydrodipicolinate</name>
        <dbReference type="ChEBI" id="CHEBI:16845"/>
    </ligand>
</feature>
<dbReference type="EC" id="1.17.1.8" evidence="1"/>
<dbReference type="EMBL" id="CP000647">
    <property type="protein sequence ID" value="ABR75499.1"/>
    <property type="molecule type" value="Genomic_DNA"/>
</dbReference>
<dbReference type="RefSeq" id="WP_004151369.1">
    <property type="nucleotide sequence ID" value="NC_009648.1"/>
</dbReference>
<dbReference type="SMR" id="A6T4H8"/>
<dbReference type="STRING" id="272620.KPN_00039"/>
<dbReference type="jPOST" id="A6T4H8"/>
<dbReference type="PaxDb" id="272620-KPN_00039"/>
<dbReference type="EnsemblBacteria" id="ABR75499">
    <property type="protein sequence ID" value="ABR75499"/>
    <property type="gene ID" value="KPN_00039"/>
</dbReference>
<dbReference type="KEGG" id="kpn:KPN_00039"/>
<dbReference type="HOGENOM" id="CLU_047479_2_1_6"/>
<dbReference type="UniPathway" id="UPA00034">
    <property type="reaction ID" value="UER00018"/>
</dbReference>
<dbReference type="Proteomes" id="UP000000265">
    <property type="component" value="Chromosome"/>
</dbReference>
<dbReference type="GO" id="GO:0005829">
    <property type="term" value="C:cytosol"/>
    <property type="evidence" value="ECO:0007669"/>
    <property type="project" value="TreeGrafter"/>
</dbReference>
<dbReference type="GO" id="GO:0008839">
    <property type="term" value="F:4-hydroxy-tetrahydrodipicolinate reductase"/>
    <property type="evidence" value="ECO:0007669"/>
    <property type="project" value="UniProtKB-EC"/>
</dbReference>
<dbReference type="GO" id="GO:0051287">
    <property type="term" value="F:NAD binding"/>
    <property type="evidence" value="ECO:0007669"/>
    <property type="project" value="UniProtKB-UniRule"/>
</dbReference>
<dbReference type="GO" id="GO:0050661">
    <property type="term" value="F:NADP binding"/>
    <property type="evidence" value="ECO:0007669"/>
    <property type="project" value="UniProtKB-UniRule"/>
</dbReference>
<dbReference type="GO" id="GO:0016726">
    <property type="term" value="F:oxidoreductase activity, acting on CH or CH2 groups, NAD or NADP as acceptor"/>
    <property type="evidence" value="ECO:0007669"/>
    <property type="project" value="UniProtKB-UniRule"/>
</dbReference>
<dbReference type="GO" id="GO:0019877">
    <property type="term" value="P:diaminopimelate biosynthetic process"/>
    <property type="evidence" value="ECO:0007669"/>
    <property type="project" value="UniProtKB-UniRule"/>
</dbReference>
<dbReference type="GO" id="GO:0009089">
    <property type="term" value="P:lysine biosynthetic process via diaminopimelate"/>
    <property type="evidence" value="ECO:0007669"/>
    <property type="project" value="UniProtKB-UniRule"/>
</dbReference>
<dbReference type="CDD" id="cd02274">
    <property type="entry name" value="DHDPR_N"/>
    <property type="match status" value="1"/>
</dbReference>
<dbReference type="FunFam" id="3.30.360.10:FF:000004">
    <property type="entry name" value="4-hydroxy-tetrahydrodipicolinate reductase"/>
    <property type="match status" value="1"/>
</dbReference>
<dbReference type="FunFam" id="3.40.50.720:FF:000048">
    <property type="entry name" value="4-hydroxy-tetrahydrodipicolinate reductase"/>
    <property type="match status" value="1"/>
</dbReference>
<dbReference type="Gene3D" id="3.30.360.10">
    <property type="entry name" value="Dihydrodipicolinate Reductase, domain 2"/>
    <property type="match status" value="1"/>
</dbReference>
<dbReference type="Gene3D" id="3.40.50.720">
    <property type="entry name" value="NAD(P)-binding Rossmann-like Domain"/>
    <property type="match status" value="1"/>
</dbReference>
<dbReference type="HAMAP" id="MF_00102">
    <property type="entry name" value="DapB"/>
    <property type="match status" value="1"/>
</dbReference>
<dbReference type="InterPro" id="IPR022663">
    <property type="entry name" value="DapB_C"/>
</dbReference>
<dbReference type="InterPro" id="IPR000846">
    <property type="entry name" value="DapB_N"/>
</dbReference>
<dbReference type="InterPro" id="IPR022664">
    <property type="entry name" value="DapB_N_CS"/>
</dbReference>
<dbReference type="InterPro" id="IPR023940">
    <property type="entry name" value="DHDPR_bac"/>
</dbReference>
<dbReference type="InterPro" id="IPR036291">
    <property type="entry name" value="NAD(P)-bd_dom_sf"/>
</dbReference>
<dbReference type="NCBIfam" id="TIGR00036">
    <property type="entry name" value="dapB"/>
    <property type="match status" value="1"/>
</dbReference>
<dbReference type="PANTHER" id="PTHR20836:SF0">
    <property type="entry name" value="4-HYDROXY-TETRAHYDRODIPICOLINATE REDUCTASE 1, CHLOROPLASTIC-RELATED"/>
    <property type="match status" value="1"/>
</dbReference>
<dbReference type="PANTHER" id="PTHR20836">
    <property type="entry name" value="DIHYDRODIPICOLINATE REDUCTASE"/>
    <property type="match status" value="1"/>
</dbReference>
<dbReference type="Pfam" id="PF05173">
    <property type="entry name" value="DapB_C"/>
    <property type="match status" value="1"/>
</dbReference>
<dbReference type="Pfam" id="PF01113">
    <property type="entry name" value="DapB_N"/>
    <property type="match status" value="1"/>
</dbReference>
<dbReference type="PIRSF" id="PIRSF000161">
    <property type="entry name" value="DHPR"/>
    <property type="match status" value="1"/>
</dbReference>
<dbReference type="SUPFAM" id="SSF55347">
    <property type="entry name" value="Glyceraldehyde-3-phosphate dehydrogenase-like, C-terminal domain"/>
    <property type="match status" value="1"/>
</dbReference>
<dbReference type="SUPFAM" id="SSF51735">
    <property type="entry name" value="NAD(P)-binding Rossmann-fold domains"/>
    <property type="match status" value="1"/>
</dbReference>
<dbReference type="PROSITE" id="PS01298">
    <property type="entry name" value="DAPB"/>
    <property type="match status" value="1"/>
</dbReference>
<accession>A6T4H8</accession>